<feature type="initiator methionine" description="Removed" evidence="2">
    <location>
        <position position="1"/>
    </location>
</feature>
<feature type="chain" id="PRO_0000178359" description="Small ribosomal subunit protein bS21">
    <location>
        <begin position="2"/>
        <end position="71"/>
    </location>
</feature>
<feature type="region of interest" description="Disordered" evidence="1">
    <location>
        <begin position="48"/>
        <end position="71"/>
    </location>
</feature>
<feature type="compositionally biased region" description="Basic residues" evidence="1">
    <location>
        <begin position="48"/>
        <end position="59"/>
    </location>
</feature>
<feature type="compositionally biased region" description="Basic and acidic residues" evidence="1">
    <location>
        <begin position="60"/>
        <end position="71"/>
    </location>
</feature>
<proteinExistence type="evidence at protein level"/>
<name>RS21_PSEAE</name>
<protein>
    <recommendedName>
        <fullName evidence="3">Small ribosomal subunit protein bS21</fullName>
    </recommendedName>
    <alternativeName>
        <fullName>30S ribosomal protein S21</fullName>
    </alternativeName>
</protein>
<keyword id="KW-0002">3D-structure</keyword>
<keyword id="KW-0903">Direct protein sequencing</keyword>
<keyword id="KW-1185">Reference proteome</keyword>
<keyword id="KW-0687">Ribonucleoprotein</keyword>
<keyword id="KW-0689">Ribosomal protein</keyword>
<reference key="1">
    <citation type="journal article" date="2000" name="Nature">
        <title>Complete genome sequence of Pseudomonas aeruginosa PAO1, an opportunistic pathogen.</title>
        <authorList>
            <person name="Stover C.K."/>
            <person name="Pham X.-Q.T."/>
            <person name="Erwin A.L."/>
            <person name="Mizoguchi S.D."/>
            <person name="Warrener P."/>
            <person name="Hickey M.J."/>
            <person name="Brinkman F.S.L."/>
            <person name="Hufnagle W.O."/>
            <person name="Kowalik D.J."/>
            <person name="Lagrou M."/>
            <person name="Garber R.L."/>
            <person name="Goltry L."/>
            <person name="Tolentino E."/>
            <person name="Westbrock-Wadman S."/>
            <person name="Yuan Y."/>
            <person name="Brody L.L."/>
            <person name="Coulter S.N."/>
            <person name="Folger K.R."/>
            <person name="Kas A."/>
            <person name="Larbig K."/>
            <person name="Lim R.M."/>
            <person name="Smith K.A."/>
            <person name="Spencer D.H."/>
            <person name="Wong G.K.-S."/>
            <person name="Wu Z."/>
            <person name="Paulsen I.T."/>
            <person name="Reizer J."/>
            <person name="Saier M.H. Jr."/>
            <person name="Hancock R.E.W."/>
            <person name="Lory S."/>
            <person name="Olson M.V."/>
        </authorList>
    </citation>
    <scope>NUCLEOTIDE SEQUENCE [LARGE SCALE GENOMIC DNA]</scope>
    <source>
        <strain>ATCC 15692 / DSM 22644 / CIP 104116 / JCM 14847 / LMG 12228 / 1C / PRS 101 / PAO1</strain>
    </source>
</reference>
<reference key="2">
    <citation type="journal article" date="1995" name="Int. J. Syst. Bacteriol.">
        <title>Comparative ribosomal protein sequence analyses of a phylogenetically defined genus, Pseudomonas, and its relatives.</title>
        <authorList>
            <person name="Ochi K."/>
        </authorList>
    </citation>
    <scope>PROTEIN SEQUENCE OF 2-20</scope>
    <source>
        <strain>ATCC 10145 / DSM 50071 / JCM 5962 / LMG 1242 / NBRC 12689 / NCIMB 8295 / NRRL B-771</strain>
    </source>
</reference>
<evidence type="ECO:0000256" key="1">
    <source>
        <dbReference type="SAM" id="MobiDB-lite"/>
    </source>
</evidence>
<evidence type="ECO:0000269" key="2">
    <source>
    </source>
</evidence>
<evidence type="ECO:0000305" key="3"/>
<organism>
    <name type="scientific">Pseudomonas aeruginosa (strain ATCC 15692 / DSM 22644 / CIP 104116 / JCM 14847 / LMG 12228 / 1C / PRS 101 / PAO1)</name>
    <dbReference type="NCBI Taxonomy" id="208964"/>
    <lineage>
        <taxon>Bacteria</taxon>
        <taxon>Pseudomonadati</taxon>
        <taxon>Pseudomonadota</taxon>
        <taxon>Gammaproteobacteria</taxon>
        <taxon>Pseudomonadales</taxon>
        <taxon>Pseudomonadaceae</taxon>
        <taxon>Pseudomonas</taxon>
    </lineage>
</organism>
<sequence length="71" mass="8485">MPAVKVKENEPFDVALRRFKRSCEKAGVLAEVRSREFYEKPTAERKRKAAAAVKRHAKKVQREQRRRERLY</sequence>
<dbReference type="EMBL" id="AE004091">
    <property type="protein sequence ID" value="AAG03968.1"/>
    <property type="molecule type" value="Genomic_DNA"/>
</dbReference>
<dbReference type="PIR" id="G83572">
    <property type="entry name" value="G83572"/>
</dbReference>
<dbReference type="RefSeq" id="NP_249270.1">
    <property type="nucleotide sequence ID" value="NC_002516.2"/>
</dbReference>
<dbReference type="RefSeq" id="WP_003085057.1">
    <property type="nucleotide sequence ID" value="NZ_QZGE01000010.1"/>
</dbReference>
<dbReference type="PDB" id="7UNR">
    <property type="method" value="EM"/>
    <property type="resolution" value="2.90 A"/>
    <property type="chains" value="u=1-71"/>
</dbReference>
<dbReference type="PDB" id="7UNU">
    <property type="method" value="EM"/>
    <property type="resolution" value="2.90 A"/>
    <property type="chains" value="u=1-71"/>
</dbReference>
<dbReference type="PDB" id="7UNV">
    <property type="method" value="EM"/>
    <property type="resolution" value="2.70 A"/>
    <property type="chains" value="u=1-71"/>
</dbReference>
<dbReference type="PDB" id="7UNW">
    <property type="method" value="EM"/>
    <property type="resolution" value="2.60 A"/>
    <property type="chains" value="u=1-71"/>
</dbReference>
<dbReference type="PDB" id="8CD1">
    <property type="method" value="EM"/>
    <property type="resolution" value="3.00 A"/>
    <property type="chains" value="u=1-71"/>
</dbReference>
<dbReference type="PDB" id="8RWG">
    <property type="method" value="EM"/>
    <property type="resolution" value="2.46 A"/>
    <property type="chains" value="t=1-71"/>
</dbReference>
<dbReference type="PDBsum" id="7UNR"/>
<dbReference type="PDBsum" id="7UNU"/>
<dbReference type="PDBsum" id="7UNV"/>
<dbReference type="PDBsum" id="7UNW"/>
<dbReference type="PDBsum" id="8CD1"/>
<dbReference type="PDBsum" id="8RWG"/>
<dbReference type="EMDB" id="EMD-16566"/>
<dbReference type="EMDB" id="EMD-19547"/>
<dbReference type="EMDB" id="EMD-26630"/>
<dbReference type="EMDB" id="EMD-26633"/>
<dbReference type="EMDB" id="EMD-26634"/>
<dbReference type="EMDB" id="EMD-26635"/>
<dbReference type="SMR" id="Q9I5V8"/>
<dbReference type="FunCoup" id="Q9I5V8">
    <property type="interactions" value="619"/>
</dbReference>
<dbReference type="STRING" id="208964.PA0579"/>
<dbReference type="PaxDb" id="208964-PA0579"/>
<dbReference type="DNASU" id="880307"/>
<dbReference type="GeneID" id="880307"/>
<dbReference type="GeneID" id="88187573"/>
<dbReference type="KEGG" id="pae:PA0579"/>
<dbReference type="PATRIC" id="fig|208964.12.peg.614"/>
<dbReference type="PseudoCAP" id="PA0579"/>
<dbReference type="HOGENOM" id="CLU_159258_1_0_6"/>
<dbReference type="InParanoid" id="Q9I5V8"/>
<dbReference type="OrthoDB" id="9799244at2"/>
<dbReference type="PhylomeDB" id="Q9I5V8"/>
<dbReference type="BioCyc" id="PAER208964:G1FZ6-586-MONOMER"/>
<dbReference type="PRO" id="PR:Q9I5V8"/>
<dbReference type="Proteomes" id="UP000002438">
    <property type="component" value="Chromosome"/>
</dbReference>
<dbReference type="GO" id="GO:1990904">
    <property type="term" value="C:ribonucleoprotein complex"/>
    <property type="evidence" value="ECO:0007669"/>
    <property type="project" value="UniProtKB-KW"/>
</dbReference>
<dbReference type="GO" id="GO:0005840">
    <property type="term" value="C:ribosome"/>
    <property type="evidence" value="ECO:0007669"/>
    <property type="project" value="UniProtKB-KW"/>
</dbReference>
<dbReference type="GO" id="GO:0003735">
    <property type="term" value="F:structural constituent of ribosome"/>
    <property type="evidence" value="ECO:0007669"/>
    <property type="project" value="InterPro"/>
</dbReference>
<dbReference type="GO" id="GO:0006412">
    <property type="term" value="P:translation"/>
    <property type="evidence" value="ECO:0007669"/>
    <property type="project" value="UniProtKB-UniRule"/>
</dbReference>
<dbReference type="Gene3D" id="1.20.5.1150">
    <property type="entry name" value="Ribosomal protein S8"/>
    <property type="match status" value="1"/>
</dbReference>
<dbReference type="HAMAP" id="MF_00358">
    <property type="entry name" value="Ribosomal_bS21"/>
    <property type="match status" value="1"/>
</dbReference>
<dbReference type="InterPro" id="IPR001911">
    <property type="entry name" value="Ribosomal_bS21"/>
</dbReference>
<dbReference type="InterPro" id="IPR018278">
    <property type="entry name" value="Ribosomal_bS21_CS"/>
</dbReference>
<dbReference type="InterPro" id="IPR038380">
    <property type="entry name" value="Ribosomal_bS21_sf"/>
</dbReference>
<dbReference type="NCBIfam" id="TIGR00030">
    <property type="entry name" value="S21p"/>
    <property type="match status" value="1"/>
</dbReference>
<dbReference type="PANTHER" id="PTHR21109">
    <property type="entry name" value="MITOCHONDRIAL 28S RIBOSOMAL PROTEIN S21"/>
    <property type="match status" value="1"/>
</dbReference>
<dbReference type="PANTHER" id="PTHR21109:SF22">
    <property type="entry name" value="SMALL RIBOSOMAL SUBUNIT PROTEIN BS21"/>
    <property type="match status" value="1"/>
</dbReference>
<dbReference type="Pfam" id="PF01165">
    <property type="entry name" value="Ribosomal_S21"/>
    <property type="match status" value="1"/>
</dbReference>
<dbReference type="PRINTS" id="PR00976">
    <property type="entry name" value="RIBOSOMALS21"/>
</dbReference>
<dbReference type="PROSITE" id="PS01181">
    <property type="entry name" value="RIBOSOMAL_S21"/>
    <property type="match status" value="1"/>
</dbReference>
<accession>Q9I5V8</accession>
<accession>Q9R4Q2</accession>
<gene>
    <name type="primary">rpsU</name>
    <name type="ordered locus">PA0579</name>
</gene>
<comment type="similarity">
    <text evidence="3">Belongs to the bacterial ribosomal protein bS21 family.</text>
</comment>